<organism>
    <name type="scientific">Escherichia coli (strain UTI89 / UPEC)</name>
    <dbReference type="NCBI Taxonomy" id="364106"/>
    <lineage>
        <taxon>Bacteria</taxon>
        <taxon>Pseudomonadati</taxon>
        <taxon>Pseudomonadota</taxon>
        <taxon>Gammaproteobacteria</taxon>
        <taxon>Enterobacterales</taxon>
        <taxon>Enterobacteriaceae</taxon>
        <taxon>Escherichia</taxon>
    </lineage>
</organism>
<gene>
    <name evidence="1" type="primary">yaaA</name>
    <name type="ordered locus">UTI89_C0007</name>
</gene>
<comment type="similarity">
    <text evidence="1">Belongs to the UPF0246 family.</text>
</comment>
<protein>
    <recommendedName>
        <fullName evidence="1">UPF0246 protein YaaA</fullName>
    </recommendedName>
</protein>
<feature type="chain" id="PRO_0000262015" description="UPF0246 protein YaaA">
    <location>
        <begin position="1"/>
        <end position="258"/>
    </location>
</feature>
<sequence length="258" mass="29569">MLILISPAKTLDYQSPLTTTRYTLPELLDNAQQLIHEARKLTPPQISSLMRISDKLAGINAARFHDWQPNFTPENARQAILAFKGDVYTGLQAETFSEDDFDFAQQHLRMISGLYGVLRPLDLMQPYRLEMGIRLENARGKDLYQFWGDIITNKLNEALAAQGDNVVINLASDEYFKSVKPKKLNAEIIKPVFLDEKNGKFKIISFYAKKARGLMSRFIIENRLTKPEQLTGFNSEGYFFDEASSSNGELVFKRYEQR</sequence>
<dbReference type="EMBL" id="CP000243">
    <property type="protein sequence ID" value="ABE05517.1"/>
    <property type="molecule type" value="Genomic_DNA"/>
</dbReference>
<dbReference type="RefSeq" id="WP_000906187.1">
    <property type="nucleotide sequence ID" value="NZ_CP064825.1"/>
</dbReference>
<dbReference type="SMR" id="Q1RGJ7"/>
<dbReference type="KEGG" id="eci:UTI89_C0007"/>
<dbReference type="HOGENOM" id="CLU_061989_0_0_6"/>
<dbReference type="Proteomes" id="UP000001952">
    <property type="component" value="Chromosome"/>
</dbReference>
<dbReference type="GO" id="GO:0005829">
    <property type="term" value="C:cytosol"/>
    <property type="evidence" value="ECO:0007669"/>
    <property type="project" value="TreeGrafter"/>
</dbReference>
<dbReference type="GO" id="GO:0033194">
    <property type="term" value="P:response to hydroperoxide"/>
    <property type="evidence" value="ECO:0007669"/>
    <property type="project" value="TreeGrafter"/>
</dbReference>
<dbReference type="HAMAP" id="MF_00652">
    <property type="entry name" value="UPF0246"/>
    <property type="match status" value="1"/>
</dbReference>
<dbReference type="InterPro" id="IPR005583">
    <property type="entry name" value="YaaA"/>
</dbReference>
<dbReference type="NCBIfam" id="NF002541">
    <property type="entry name" value="PRK02101.1-1"/>
    <property type="match status" value="1"/>
</dbReference>
<dbReference type="NCBIfam" id="NF002542">
    <property type="entry name" value="PRK02101.1-3"/>
    <property type="match status" value="1"/>
</dbReference>
<dbReference type="PANTHER" id="PTHR30283:SF4">
    <property type="entry name" value="PEROXIDE STRESS RESISTANCE PROTEIN YAAA"/>
    <property type="match status" value="1"/>
</dbReference>
<dbReference type="PANTHER" id="PTHR30283">
    <property type="entry name" value="PEROXIDE STRESS RESPONSE PROTEIN YAAA"/>
    <property type="match status" value="1"/>
</dbReference>
<dbReference type="Pfam" id="PF03883">
    <property type="entry name" value="H2O2_YaaD"/>
    <property type="match status" value="1"/>
</dbReference>
<evidence type="ECO:0000255" key="1">
    <source>
        <dbReference type="HAMAP-Rule" id="MF_00652"/>
    </source>
</evidence>
<accession>Q1RGJ7</accession>
<proteinExistence type="inferred from homology"/>
<name>YAAA_ECOUT</name>
<reference key="1">
    <citation type="journal article" date="2006" name="Proc. Natl. Acad. Sci. U.S.A.">
        <title>Identification of genes subject to positive selection in uropathogenic strains of Escherichia coli: a comparative genomics approach.</title>
        <authorList>
            <person name="Chen S.L."/>
            <person name="Hung C.-S."/>
            <person name="Xu J."/>
            <person name="Reigstad C.S."/>
            <person name="Magrini V."/>
            <person name="Sabo A."/>
            <person name="Blasiar D."/>
            <person name="Bieri T."/>
            <person name="Meyer R.R."/>
            <person name="Ozersky P."/>
            <person name="Armstrong J.R."/>
            <person name="Fulton R.S."/>
            <person name="Latreille J.P."/>
            <person name="Spieth J."/>
            <person name="Hooton T.M."/>
            <person name="Mardis E.R."/>
            <person name="Hultgren S.J."/>
            <person name="Gordon J.I."/>
        </authorList>
    </citation>
    <scope>NUCLEOTIDE SEQUENCE [LARGE SCALE GENOMIC DNA]</scope>
    <source>
        <strain>UTI89 / UPEC</strain>
    </source>
</reference>